<reference key="1">
    <citation type="submission" date="2009-07" db="EMBL/GenBank/DDBJ databases">
        <title>Complete sequence of Pectobacterium carotovorum subsp. carotovorum PC1.</title>
        <authorList>
            <consortium name="US DOE Joint Genome Institute"/>
            <person name="Lucas S."/>
            <person name="Copeland A."/>
            <person name="Lapidus A."/>
            <person name="Glavina del Rio T."/>
            <person name="Tice H."/>
            <person name="Bruce D."/>
            <person name="Goodwin L."/>
            <person name="Pitluck S."/>
            <person name="Munk A.C."/>
            <person name="Brettin T."/>
            <person name="Detter J.C."/>
            <person name="Han C."/>
            <person name="Tapia R."/>
            <person name="Larimer F."/>
            <person name="Land M."/>
            <person name="Hauser L."/>
            <person name="Kyrpides N."/>
            <person name="Mikhailova N."/>
            <person name="Balakrishnan V."/>
            <person name="Glasner J."/>
            <person name="Perna N.T."/>
        </authorList>
    </citation>
    <scope>NUCLEOTIDE SEQUENCE [LARGE SCALE GENOMIC DNA]</scope>
    <source>
        <strain>PC1</strain>
    </source>
</reference>
<gene>
    <name type="ordered locus">PC1_3453</name>
</gene>
<accession>C6DE33</accession>
<comment type="similarity">
    <text evidence="1">Belongs to the UPF0235 family.</text>
</comment>
<dbReference type="EMBL" id="CP001657">
    <property type="protein sequence ID" value="ACT14469.1"/>
    <property type="molecule type" value="Genomic_DNA"/>
</dbReference>
<dbReference type="SMR" id="C6DE33"/>
<dbReference type="STRING" id="561230.PC1_3453"/>
<dbReference type="KEGG" id="pct:PC1_3453"/>
<dbReference type="eggNOG" id="COG1872">
    <property type="taxonomic scope" value="Bacteria"/>
</dbReference>
<dbReference type="HOGENOM" id="CLU_130694_5_0_6"/>
<dbReference type="OrthoDB" id="9800587at2"/>
<dbReference type="Proteomes" id="UP000002736">
    <property type="component" value="Chromosome"/>
</dbReference>
<dbReference type="GO" id="GO:0005737">
    <property type="term" value="C:cytoplasm"/>
    <property type="evidence" value="ECO:0007669"/>
    <property type="project" value="TreeGrafter"/>
</dbReference>
<dbReference type="Gene3D" id="3.30.1200.10">
    <property type="entry name" value="YggU-like"/>
    <property type="match status" value="1"/>
</dbReference>
<dbReference type="HAMAP" id="MF_00634">
    <property type="entry name" value="UPF0235"/>
    <property type="match status" value="1"/>
</dbReference>
<dbReference type="InterPro" id="IPR003746">
    <property type="entry name" value="DUF167"/>
</dbReference>
<dbReference type="InterPro" id="IPR036591">
    <property type="entry name" value="YggU-like_sf"/>
</dbReference>
<dbReference type="NCBIfam" id="TIGR00251">
    <property type="entry name" value="DUF167 family protein"/>
    <property type="match status" value="1"/>
</dbReference>
<dbReference type="NCBIfam" id="NF003466">
    <property type="entry name" value="PRK05090.1"/>
    <property type="match status" value="1"/>
</dbReference>
<dbReference type="PANTHER" id="PTHR13420">
    <property type="entry name" value="UPF0235 PROTEIN C15ORF40"/>
    <property type="match status" value="1"/>
</dbReference>
<dbReference type="PANTHER" id="PTHR13420:SF7">
    <property type="entry name" value="UPF0235 PROTEIN C15ORF40"/>
    <property type="match status" value="1"/>
</dbReference>
<dbReference type="Pfam" id="PF02594">
    <property type="entry name" value="DUF167"/>
    <property type="match status" value="1"/>
</dbReference>
<dbReference type="SMART" id="SM01152">
    <property type="entry name" value="DUF167"/>
    <property type="match status" value="1"/>
</dbReference>
<dbReference type="SUPFAM" id="SSF69786">
    <property type="entry name" value="YggU-like"/>
    <property type="match status" value="1"/>
</dbReference>
<sequence length="96" mass="10606">MSAITRHGDALVIRLYIQPKASRDQIVGLHGDELKVAITAPPVDGQANAHLTKFLAKQFRVAKSLVVIEKGELGRHKQIRITHPQHIPADVADFIE</sequence>
<feature type="chain" id="PRO_1000212352" description="UPF0235 protein PC1_3453">
    <location>
        <begin position="1"/>
        <end position="96"/>
    </location>
</feature>
<name>Y3453_PECCP</name>
<protein>
    <recommendedName>
        <fullName evidence="1">UPF0235 protein PC1_3453</fullName>
    </recommendedName>
</protein>
<proteinExistence type="inferred from homology"/>
<organism>
    <name type="scientific">Pectobacterium carotovorum subsp. carotovorum (strain PC1)</name>
    <dbReference type="NCBI Taxonomy" id="561230"/>
    <lineage>
        <taxon>Bacteria</taxon>
        <taxon>Pseudomonadati</taxon>
        <taxon>Pseudomonadota</taxon>
        <taxon>Gammaproteobacteria</taxon>
        <taxon>Enterobacterales</taxon>
        <taxon>Pectobacteriaceae</taxon>
        <taxon>Pectobacterium</taxon>
    </lineage>
</organism>
<evidence type="ECO:0000255" key="1">
    <source>
        <dbReference type="HAMAP-Rule" id="MF_00634"/>
    </source>
</evidence>